<organism>
    <name type="scientific">Escherichia coli O7:K1 (strain IAI39 / ExPEC)</name>
    <dbReference type="NCBI Taxonomy" id="585057"/>
    <lineage>
        <taxon>Bacteria</taxon>
        <taxon>Pseudomonadati</taxon>
        <taxon>Pseudomonadota</taxon>
        <taxon>Gammaproteobacteria</taxon>
        <taxon>Enterobacterales</taxon>
        <taxon>Enterobacteriaceae</taxon>
        <taxon>Escherichia</taxon>
    </lineage>
</organism>
<gene>
    <name evidence="1" type="primary">rbn</name>
    <name type="synonym">rnz</name>
    <name type="ordered locus">ECIAI39_2416</name>
</gene>
<sequence>MELIFLGTSAGVPTRTRNVTAILLNLQHPTQSGLWLFDCGEGTQHQLLHTAFNPGKLDKIFISHLHGDHLFGLPGLLCSRSMSGIVQPLTIYGPQGIREFVETALRISGSWTDYPLEIVEIGAGEIFDDGLRKVTAYPLEHPLECYGYRIEEHDKPGALNAQALKAAGVPPGPLFQALKAGKTIMLEDGRQINGADYLAAPVPGKALAIFGDTGPCDAALDLAKGVDVMVHEATLDITMEAKANSRGHSSTRQAATLAREAGVGKLIITHVSSRYDDKGCQHLLRECRSIFPATELANDFTVFNV</sequence>
<feature type="chain" id="PRO_1000187955" description="Ribonuclease BN">
    <location>
        <begin position="1"/>
        <end position="305"/>
    </location>
</feature>
<feature type="active site" description="Proton acceptor" evidence="1">
    <location>
        <position position="68"/>
    </location>
</feature>
<feature type="binding site" evidence="1">
    <location>
        <position position="64"/>
    </location>
    <ligand>
        <name>Zn(2+)</name>
        <dbReference type="ChEBI" id="CHEBI:29105"/>
        <label>1</label>
        <note>catalytic</note>
    </ligand>
</feature>
<feature type="binding site" evidence="1">
    <location>
        <position position="66"/>
    </location>
    <ligand>
        <name>Zn(2+)</name>
        <dbReference type="ChEBI" id="CHEBI:29105"/>
        <label>1</label>
        <note>catalytic</note>
    </ligand>
</feature>
<feature type="binding site" evidence="1">
    <location>
        <position position="68"/>
    </location>
    <ligand>
        <name>Zn(2+)</name>
        <dbReference type="ChEBI" id="CHEBI:29105"/>
        <label>2</label>
        <note>catalytic</note>
    </ligand>
</feature>
<feature type="binding site" evidence="1">
    <location>
        <position position="69"/>
    </location>
    <ligand>
        <name>Zn(2+)</name>
        <dbReference type="ChEBI" id="CHEBI:29105"/>
        <label>2</label>
        <note>catalytic</note>
    </ligand>
</feature>
<feature type="binding site" evidence="1">
    <location>
        <position position="141"/>
    </location>
    <ligand>
        <name>Zn(2+)</name>
        <dbReference type="ChEBI" id="CHEBI:29105"/>
        <label>1</label>
        <note>catalytic</note>
    </ligand>
</feature>
<feature type="binding site" evidence="1">
    <location>
        <position position="212"/>
    </location>
    <ligand>
        <name>Zn(2+)</name>
        <dbReference type="ChEBI" id="CHEBI:29105"/>
        <label>1</label>
        <note>catalytic</note>
    </ligand>
</feature>
<feature type="binding site" evidence="1">
    <location>
        <position position="212"/>
    </location>
    <ligand>
        <name>Zn(2+)</name>
        <dbReference type="ChEBI" id="CHEBI:29105"/>
        <label>2</label>
        <note>catalytic</note>
    </ligand>
</feature>
<feature type="binding site" evidence="1">
    <location>
        <position position="270"/>
    </location>
    <ligand>
        <name>Zn(2+)</name>
        <dbReference type="ChEBI" id="CHEBI:29105"/>
        <label>2</label>
        <note>catalytic</note>
    </ligand>
</feature>
<reference key="1">
    <citation type="journal article" date="2009" name="PLoS Genet.">
        <title>Organised genome dynamics in the Escherichia coli species results in highly diverse adaptive paths.</title>
        <authorList>
            <person name="Touchon M."/>
            <person name="Hoede C."/>
            <person name="Tenaillon O."/>
            <person name="Barbe V."/>
            <person name="Baeriswyl S."/>
            <person name="Bidet P."/>
            <person name="Bingen E."/>
            <person name="Bonacorsi S."/>
            <person name="Bouchier C."/>
            <person name="Bouvet O."/>
            <person name="Calteau A."/>
            <person name="Chiapello H."/>
            <person name="Clermont O."/>
            <person name="Cruveiller S."/>
            <person name="Danchin A."/>
            <person name="Diard M."/>
            <person name="Dossat C."/>
            <person name="Karoui M.E."/>
            <person name="Frapy E."/>
            <person name="Garry L."/>
            <person name="Ghigo J.M."/>
            <person name="Gilles A.M."/>
            <person name="Johnson J."/>
            <person name="Le Bouguenec C."/>
            <person name="Lescat M."/>
            <person name="Mangenot S."/>
            <person name="Martinez-Jehanne V."/>
            <person name="Matic I."/>
            <person name="Nassif X."/>
            <person name="Oztas S."/>
            <person name="Petit M.A."/>
            <person name="Pichon C."/>
            <person name="Rouy Z."/>
            <person name="Ruf C.S."/>
            <person name="Schneider D."/>
            <person name="Tourret J."/>
            <person name="Vacherie B."/>
            <person name="Vallenet D."/>
            <person name="Medigue C."/>
            <person name="Rocha E.P.C."/>
            <person name="Denamur E."/>
        </authorList>
    </citation>
    <scope>NUCLEOTIDE SEQUENCE [LARGE SCALE GENOMIC DNA]</scope>
    <source>
        <strain>IAI39 / ExPEC</strain>
    </source>
</reference>
<keyword id="KW-0255">Endonuclease</keyword>
<keyword id="KW-0269">Exonuclease</keyword>
<keyword id="KW-0378">Hydrolase</keyword>
<keyword id="KW-0479">Metal-binding</keyword>
<keyword id="KW-0540">Nuclease</keyword>
<keyword id="KW-0819">tRNA processing</keyword>
<keyword id="KW-0862">Zinc</keyword>
<comment type="function">
    <text evidence="1">Zinc phosphodiesterase, which has both exoribonuclease and endoribonuclease activities.</text>
</comment>
<comment type="cofactor">
    <cofactor evidence="1">
        <name>Zn(2+)</name>
        <dbReference type="ChEBI" id="CHEBI:29105"/>
    </cofactor>
    <text evidence="1">Binds 2 Zn(2+) ions.</text>
</comment>
<comment type="subunit">
    <text evidence="1">Homodimer.</text>
</comment>
<comment type="similarity">
    <text evidence="1">Belongs to the RNase Z family. RNase BN subfamily.</text>
</comment>
<name>RBN_ECO7I</name>
<protein>
    <recommendedName>
        <fullName evidence="1">Ribonuclease BN</fullName>
        <shortName evidence="1">RNase BN</shortName>
        <ecNumber evidence="1">3.1.-.-</ecNumber>
    </recommendedName>
    <alternativeName>
        <fullName evidence="1">Ribonuclease Z homolog</fullName>
        <shortName evidence="1">RNase Z homolog</shortName>
    </alternativeName>
</protein>
<accession>B7NNU8</accession>
<proteinExistence type="inferred from homology"/>
<dbReference type="EC" id="3.1.-.-" evidence="1"/>
<dbReference type="EMBL" id="CU928164">
    <property type="protein sequence ID" value="CAR18542.1"/>
    <property type="molecule type" value="Genomic_DNA"/>
</dbReference>
<dbReference type="RefSeq" id="WP_001604679.1">
    <property type="nucleotide sequence ID" value="NC_011750.1"/>
</dbReference>
<dbReference type="RefSeq" id="YP_002408372.1">
    <property type="nucleotide sequence ID" value="NC_011750.1"/>
</dbReference>
<dbReference type="SMR" id="B7NNU8"/>
<dbReference type="STRING" id="585057.ECIAI39_2416"/>
<dbReference type="KEGG" id="ect:ECIAI39_2416"/>
<dbReference type="PATRIC" id="fig|585057.6.peg.2518"/>
<dbReference type="HOGENOM" id="CLU_031317_2_0_6"/>
<dbReference type="Proteomes" id="UP000000749">
    <property type="component" value="Chromosome"/>
</dbReference>
<dbReference type="GO" id="GO:0042781">
    <property type="term" value="F:3'-tRNA processing endoribonuclease activity"/>
    <property type="evidence" value="ECO:0007669"/>
    <property type="project" value="TreeGrafter"/>
</dbReference>
<dbReference type="GO" id="GO:0004527">
    <property type="term" value="F:exonuclease activity"/>
    <property type="evidence" value="ECO:0007669"/>
    <property type="project" value="UniProtKB-UniRule"/>
</dbReference>
<dbReference type="GO" id="GO:0008270">
    <property type="term" value="F:zinc ion binding"/>
    <property type="evidence" value="ECO:0007669"/>
    <property type="project" value="UniProtKB-UniRule"/>
</dbReference>
<dbReference type="CDD" id="cd07717">
    <property type="entry name" value="RNaseZ_ZiPD-like_MBL-fold"/>
    <property type="match status" value="1"/>
</dbReference>
<dbReference type="FunFam" id="3.60.15.10:FF:000002">
    <property type="entry name" value="Ribonuclease Z"/>
    <property type="match status" value="1"/>
</dbReference>
<dbReference type="Gene3D" id="3.60.15.10">
    <property type="entry name" value="Ribonuclease Z/Hydroxyacylglutathione hydrolase-like"/>
    <property type="match status" value="1"/>
</dbReference>
<dbReference type="HAMAP" id="MF_01818">
    <property type="entry name" value="RNase_Z_BN"/>
    <property type="match status" value="1"/>
</dbReference>
<dbReference type="InterPro" id="IPR001279">
    <property type="entry name" value="Metallo-B-lactamas"/>
</dbReference>
<dbReference type="InterPro" id="IPR036866">
    <property type="entry name" value="RibonucZ/Hydroxyglut_hydro"/>
</dbReference>
<dbReference type="InterPro" id="IPR013469">
    <property type="entry name" value="Rnase_BN"/>
</dbReference>
<dbReference type="InterPro" id="IPR013471">
    <property type="entry name" value="RNase_Z/BN"/>
</dbReference>
<dbReference type="NCBIfam" id="NF000800">
    <property type="entry name" value="PRK00055.1-1"/>
    <property type="match status" value="1"/>
</dbReference>
<dbReference type="NCBIfam" id="NF000801">
    <property type="entry name" value="PRK00055.1-3"/>
    <property type="match status" value="1"/>
</dbReference>
<dbReference type="NCBIfam" id="TIGR02651">
    <property type="entry name" value="RNase_Z"/>
    <property type="match status" value="1"/>
</dbReference>
<dbReference type="NCBIfam" id="TIGR02649">
    <property type="entry name" value="true_RNase_BN"/>
    <property type="match status" value="1"/>
</dbReference>
<dbReference type="PANTHER" id="PTHR46018">
    <property type="entry name" value="ZINC PHOSPHODIESTERASE ELAC PROTEIN 1"/>
    <property type="match status" value="1"/>
</dbReference>
<dbReference type="PANTHER" id="PTHR46018:SF2">
    <property type="entry name" value="ZINC PHOSPHODIESTERASE ELAC PROTEIN 1"/>
    <property type="match status" value="1"/>
</dbReference>
<dbReference type="Pfam" id="PF12706">
    <property type="entry name" value="Lactamase_B_2"/>
    <property type="match status" value="1"/>
</dbReference>
<dbReference type="SUPFAM" id="SSF56281">
    <property type="entry name" value="Metallo-hydrolase/oxidoreductase"/>
    <property type="match status" value="1"/>
</dbReference>
<evidence type="ECO:0000255" key="1">
    <source>
        <dbReference type="HAMAP-Rule" id="MF_01818"/>
    </source>
</evidence>